<proteinExistence type="inferred from homology"/>
<sequence>MLVVAFKPGHDGAVAAIDDRRLLYSLESEKDSRPRYSTLLPTTFLDIAERLGAIPDVVALGGWADLRPRGVVYTGAGYEGTQEPTVTTSRFFGKEVKFFTSTHERSHIYMALGMAPKDGAPLKSVLVWEGDVGAFYLVDSEHRIIRTIPVMTGPGARYSFLFGLADPTFPDTGGKPRLNDAGKLMALAAFGDSADASPDIRHVVERVLKQDSMYPAPKAEYRDSVLHNAGVESEECKIAAALLTERLFETFAEVARRELPEGTPLYISGGCGLNCDWNSQWAQLGHFSSVFVAPCTNDSGSALGTAIDALTTFTGDPHIDWNVYSGLEFVHDTRPDPARWESVPLDHAALSSALAAGRVVAWVQGRWEIGPRALGNRSLLAEAFSSASRDRLNTVKMREDYRPIAPVCRVEDLGKVFHEDFEDPHMLYFRRVREESGVRAVTHVDGSARCQTVTGTSNPELHRLLSVFAQGQGLGVLCNTSLNFNGDGFINRMSDLVRYCEWREIQDMVVGDTWYRRIAGS</sequence>
<protein>
    <recommendedName>
        <fullName>3'-hydroxymethylcephem-O-carbamoyltransferase</fullName>
        <shortName>3'-hydroxymethylcephem-O-CASE</shortName>
        <shortName>CCT</shortName>
        <ecNumber>2.1.3.-</ecNumber>
    </recommendedName>
</protein>
<organism>
    <name type="scientific">Streptomyces clavuligerus</name>
    <dbReference type="NCBI Taxonomy" id="1901"/>
    <lineage>
        <taxon>Bacteria</taxon>
        <taxon>Bacillati</taxon>
        <taxon>Actinomycetota</taxon>
        <taxon>Actinomycetes</taxon>
        <taxon>Kitasatosporales</taxon>
        <taxon>Streptomycetaceae</taxon>
        <taxon>Streptomyces</taxon>
    </lineage>
</organism>
<reference key="1">
    <citation type="journal article" date="1998" name="J. Bacteriol.">
        <title>Investigation of the Streptomyces clavuligerus cephamycin C gene cluster and its regulation by the CcaR protein.</title>
        <authorList>
            <person name="Alexander D.C."/>
            <person name="Jensen S.E."/>
        </authorList>
    </citation>
    <scope>NUCLEOTIDE SEQUENCE [GENOMIC DNA]</scope>
    <source>
        <strain>ATCC 27064 / DSM 738 / JCM 4710 / NBRC 13307 / NCIMB 12785 / NRRL 3585 / VKM Ac-602</strain>
    </source>
</reference>
<accession>O85728</accession>
<evidence type="ECO:0000305" key="1"/>
<comment type="function">
    <text>Catalyzes the carbamoylation reaction in the cephamycin biosynthesis.</text>
</comment>
<comment type="pathway">
    <text>Antibiotic biosynthesis; cephamycin C biosynthesis.</text>
</comment>
<comment type="similarity">
    <text evidence="1">Belongs to the NodU/CmcH family.</text>
</comment>
<name>CMCH_STRCL</name>
<keyword id="KW-0045">Antibiotic biosynthesis</keyword>
<keyword id="KW-0808">Transferase</keyword>
<feature type="chain" id="PRO_0000207855" description="3'-hydroxymethylcephem-O-carbamoyltransferase">
    <location>
        <begin position="1"/>
        <end position="521"/>
    </location>
</feature>
<dbReference type="EC" id="2.1.3.-"/>
<dbReference type="EMBL" id="AH006362">
    <property type="protein sequence ID" value="AAC32493.1"/>
    <property type="molecule type" value="Genomic_DNA"/>
</dbReference>
<dbReference type="RefSeq" id="WP_003952499.1">
    <property type="nucleotide sequence ID" value="NZ_CM000913.1"/>
</dbReference>
<dbReference type="SMR" id="O85728"/>
<dbReference type="STRING" id="1901.BB341_07765"/>
<dbReference type="GeneID" id="93729316"/>
<dbReference type="eggNOG" id="COG2192">
    <property type="taxonomic scope" value="Bacteria"/>
</dbReference>
<dbReference type="OrthoDB" id="9780777at2"/>
<dbReference type="BioCyc" id="MetaCyc:MONOMER-13420"/>
<dbReference type="UniPathway" id="UPA00183"/>
<dbReference type="GO" id="GO:0016740">
    <property type="term" value="F:transferase activity"/>
    <property type="evidence" value="ECO:0007669"/>
    <property type="project" value="UniProtKB-KW"/>
</dbReference>
<dbReference type="GO" id="GO:0017000">
    <property type="term" value="P:antibiotic biosynthetic process"/>
    <property type="evidence" value="ECO:0007669"/>
    <property type="project" value="UniProtKB-KW"/>
</dbReference>
<dbReference type="CDD" id="cd24102">
    <property type="entry name" value="ASKHA_NBD_CmcH_N"/>
    <property type="match status" value="1"/>
</dbReference>
<dbReference type="Gene3D" id="3.30.420.40">
    <property type="match status" value="1"/>
</dbReference>
<dbReference type="Gene3D" id="3.90.870.20">
    <property type="entry name" value="Carbamoyltransferase, C-terminal domain"/>
    <property type="match status" value="1"/>
</dbReference>
<dbReference type="InterPro" id="IPR031730">
    <property type="entry name" value="Carbam_trans_C"/>
</dbReference>
<dbReference type="InterPro" id="IPR038152">
    <property type="entry name" value="Carbam_trans_C_sf"/>
</dbReference>
<dbReference type="InterPro" id="IPR003696">
    <property type="entry name" value="Carbtransf_dom"/>
</dbReference>
<dbReference type="InterPro" id="IPR051338">
    <property type="entry name" value="NodU/CmcH_Carbamoyltrnsfr"/>
</dbReference>
<dbReference type="PANTHER" id="PTHR34847">
    <property type="entry name" value="NODULATION PROTEIN U"/>
    <property type="match status" value="1"/>
</dbReference>
<dbReference type="PANTHER" id="PTHR34847:SF1">
    <property type="entry name" value="NODULATION PROTEIN U"/>
    <property type="match status" value="1"/>
</dbReference>
<dbReference type="Pfam" id="PF16861">
    <property type="entry name" value="Carbam_trans_C"/>
    <property type="match status" value="1"/>
</dbReference>
<dbReference type="Pfam" id="PF02543">
    <property type="entry name" value="Carbam_trans_N"/>
    <property type="match status" value="1"/>
</dbReference>
<gene>
    <name type="primary">cmcH</name>
</gene>